<accession>B7GND1</accession>
<accession>E8MN75</accession>
<evidence type="ECO:0000255" key="1">
    <source>
        <dbReference type="HAMAP-Rule" id="MF_01345"/>
    </source>
</evidence>
<evidence type="ECO:0000305" key="2"/>
<comment type="function">
    <text evidence="1">One of the primary rRNA binding proteins, it binds specifically to the 5'-end of 16S ribosomal RNA.</text>
</comment>
<comment type="subunit">
    <text evidence="1">Part of the 30S ribosomal subunit.</text>
</comment>
<comment type="similarity">
    <text evidence="1">Belongs to the universal ribosomal protein uS17 family.</text>
</comment>
<keyword id="KW-0687">Ribonucleoprotein</keyword>
<keyword id="KW-0689">Ribosomal protein</keyword>
<keyword id="KW-0694">RNA-binding</keyword>
<keyword id="KW-0699">rRNA-binding</keyword>
<reference key="1">
    <citation type="journal article" date="2008" name="Proc. Natl. Acad. Sci. U.S.A.">
        <title>The genome sequence of Bifidobacterium longum subsp. infantis reveals adaptations for milk utilization within the infant microbiome.</title>
        <authorList>
            <person name="Sela D.A."/>
            <person name="Chapman J."/>
            <person name="Adeuya A."/>
            <person name="Kim J.H."/>
            <person name="Chen F."/>
            <person name="Whitehead T.R."/>
            <person name="Lapidus A."/>
            <person name="Rokhsar D.S."/>
            <person name="Lebrilla C.B."/>
            <person name="German J.B."/>
            <person name="Price N.P."/>
            <person name="Richardson P.M."/>
            <person name="Mills D.A."/>
        </authorList>
    </citation>
    <scope>NUCLEOTIDE SEQUENCE [LARGE SCALE GENOMIC DNA]</scope>
    <source>
        <strain>ATCC 15697 / DSM 20088 / JCM 1222 / NCTC 11817 / S12</strain>
    </source>
</reference>
<reference key="2">
    <citation type="journal article" date="2011" name="Nature">
        <title>Bifidobacteria can protect from enteropathogenic infection through production of acetate.</title>
        <authorList>
            <person name="Fukuda S."/>
            <person name="Toh H."/>
            <person name="Hase K."/>
            <person name="Oshima K."/>
            <person name="Nakanishi Y."/>
            <person name="Yoshimura K."/>
            <person name="Tobe T."/>
            <person name="Clarke J.M."/>
            <person name="Topping D.L."/>
            <person name="Suzuki T."/>
            <person name="Taylor T.D."/>
            <person name="Itoh K."/>
            <person name="Kikuchi J."/>
            <person name="Morita H."/>
            <person name="Hattori M."/>
            <person name="Ohno H."/>
        </authorList>
    </citation>
    <scope>NUCLEOTIDE SEQUENCE [LARGE SCALE GENOMIC DNA]</scope>
    <source>
        <strain>ATCC 15697 / DSM 20088 / JCM 1222 / NCTC 11817 / S12</strain>
    </source>
</reference>
<proteinExistence type="inferred from homology"/>
<organism>
    <name type="scientific">Bifidobacterium longum subsp. infantis (strain ATCC 15697 / DSM 20088 / JCM 1222 / NCTC 11817 / S12)</name>
    <dbReference type="NCBI Taxonomy" id="391904"/>
    <lineage>
        <taxon>Bacteria</taxon>
        <taxon>Bacillati</taxon>
        <taxon>Actinomycetota</taxon>
        <taxon>Actinomycetes</taxon>
        <taxon>Bifidobacteriales</taxon>
        <taxon>Bifidobacteriaceae</taxon>
        <taxon>Bifidobacterium</taxon>
    </lineage>
</organism>
<name>RS17_BIFLS</name>
<protein>
    <recommendedName>
        <fullName evidence="1">Small ribosomal subunit protein uS17</fullName>
    </recommendedName>
    <alternativeName>
        <fullName evidence="2">30S ribosomal protein S17</fullName>
    </alternativeName>
</protein>
<gene>
    <name evidence="1" type="primary">rpsQ</name>
    <name type="ordered locus">Blon_2228</name>
    <name type="ordered locus">BLIJ_2301</name>
</gene>
<dbReference type="EMBL" id="CP001095">
    <property type="protein sequence ID" value="ACJ53287.1"/>
    <property type="molecule type" value="Genomic_DNA"/>
</dbReference>
<dbReference type="EMBL" id="AP010889">
    <property type="protein sequence ID" value="BAJ69878.1"/>
    <property type="molecule type" value="Genomic_DNA"/>
</dbReference>
<dbReference type="RefSeq" id="WP_007055338.1">
    <property type="nucleotide sequence ID" value="NZ_JDTT01000039.1"/>
</dbReference>
<dbReference type="SMR" id="B7GND1"/>
<dbReference type="GeneID" id="69578888"/>
<dbReference type="KEGG" id="bln:Blon_2228"/>
<dbReference type="KEGG" id="blon:BLIJ_2301"/>
<dbReference type="PATRIC" id="fig|391904.8.peg.2303"/>
<dbReference type="HOGENOM" id="CLU_073626_1_0_11"/>
<dbReference type="Proteomes" id="UP000001360">
    <property type="component" value="Chromosome"/>
</dbReference>
<dbReference type="GO" id="GO:0022627">
    <property type="term" value="C:cytosolic small ribosomal subunit"/>
    <property type="evidence" value="ECO:0007669"/>
    <property type="project" value="TreeGrafter"/>
</dbReference>
<dbReference type="GO" id="GO:0019843">
    <property type="term" value="F:rRNA binding"/>
    <property type="evidence" value="ECO:0007669"/>
    <property type="project" value="UniProtKB-UniRule"/>
</dbReference>
<dbReference type="GO" id="GO:0003735">
    <property type="term" value="F:structural constituent of ribosome"/>
    <property type="evidence" value="ECO:0007669"/>
    <property type="project" value="InterPro"/>
</dbReference>
<dbReference type="GO" id="GO:0006412">
    <property type="term" value="P:translation"/>
    <property type="evidence" value="ECO:0007669"/>
    <property type="project" value="UniProtKB-UniRule"/>
</dbReference>
<dbReference type="CDD" id="cd00364">
    <property type="entry name" value="Ribosomal_uS17"/>
    <property type="match status" value="1"/>
</dbReference>
<dbReference type="Gene3D" id="2.40.50.140">
    <property type="entry name" value="Nucleic acid-binding proteins"/>
    <property type="match status" value="1"/>
</dbReference>
<dbReference type="HAMAP" id="MF_01345_B">
    <property type="entry name" value="Ribosomal_uS17_B"/>
    <property type="match status" value="1"/>
</dbReference>
<dbReference type="InterPro" id="IPR012340">
    <property type="entry name" value="NA-bd_OB-fold"/>
</dbReference>
<dbReference type="InterPro" id="IPR000266">
    <property type="entry name" value="Ribosomal_uS17"/>
</dbReference>
<dbReference type="InterPro" id="IPR019984">
    <property type="entry name" value="Ribosomal_uS17_bact/chlr"/>
</dbReference>
<dbReference type="InterPro" id="IPR019979">
    <property type="entry name" value="Ribosomal_uS17_CS"/>
</dbReference>
<dbReference type="NCBIfam" id="NF004123">
    <property type="entry name" value="PRK05610.1"/>
    <property type="match status" value="1"/>
</dbReference>
<dbReference type="NCBIfam" id="TIGR03635">
    <property type="entry name" value="uS17_bact"/>
    <property type="match status" value="1"/>
</dbReference>
<dbReference type="PANTHER" id="PTHR10744">
    <property type="entry name" value="40S RIBOSOMAL PROTEIN S11 FAMILY MEMBER"/>
    <property type="match status" value="1"/>
</dbReference>
<dbReference type="PANTHER" id="PTHR10744:SF1">
    <property type="entry name" value="SMALL RIBOSOMAL SUBUNIT PROTEIN US17M"/>
    <property type="match status" value="1"/>
</dbReference>
<dbReference type="Pfam" id="PF00366">
    <property type="entry name" value="Ribosomal_S17"/>
    <property type="match status" value="1"/>
</dbReference>
<dbReference type="PRINTS" id="PR00973">
    <property type="entry name" value="RIBOSOMALS17"/>
</dbReference>
<dbReference type="SUPFAM" id="SSF50249">
    <property type="entry name" value="Nucleic acid-binding proteins"/>
    <property type="match status" value="1"/>
</dbReference>
<dbReference type="PROSITE" id="PS00056">
    <property type="entry name" value="RIBOSOMAL_S17"/>
    <property type="match status" value="1"/>
</dbReference>
<feature type="chain" id="PRO_1000166462" description="Small ribosomal subunit protein uS17">
    <location>
        <begin position="1"/>
        <end position="86"/>
    </location>
</feature>
<sequence length="86" mass="10091">MAEERNFRKVRRGYVVSDKMDKTITVELEQRSTHPLYGKVVRSTSKVKAHDEHNDAHIGDLVSIMETRPLSKTKRWRLESIIERAK</sequence>